<protein>
    <recommendedName>
        <fullName>Uncharacterized protein aq_aa26</fullName>
    </recommendedName>
</protein>
<name>YZ26_AQUAE</name>
<sequence length="193" mass="22552">MSGDSGVKRGAMLTSNLFDLTGERQIFRRACFLPFEVQISSKKSVNKLLGKANNSLFLKFLKCVNPEKIELKEEDPLYFSRDFLLNEGIPVPENYYGNFERAMLKGWKKLYLTSPEKFEEVRYYHKQDQKKLVPCYKVQIKDAGYLTPLEEFDNGFLQDSYLILKEEFLKTIGVSEKRNIFTSLFSVIRISKR</sequence>
<accession>O66417</accession>
<gene>
    <name type="ordered locus">aq_aa26</name>
</gene>
<geneLocation type="plasmid">
    <name>ece1</name>
</geneLocation>
<organism>
    <name type="scientific">Aquifex aeolicus (strain VF5)</name>
    <dbReference type="NCBI Taxonomy" id="224324"/>
    <lineage>
        <taxon>Bacteria</taxon>
        <taxon>Pseudomonadati</taxon>
        <taxon>Aquificota</taxon>
        <taxon>Aquificia</taxon>
        <taxon>Aquificales</taxon>
        <taxon>Aquificaceae</taxon>
        <taxon>Aquifex</taxon>
    </lineage>
</organism>
<keyword id="KW-0614">Plasmid</keyword>
<keyword id="KW-1185">Reference proteome</keyword>
<reference key="1">
    <citation type="journal article" date="1998" name="Nature">
        <title>The complete genome of the hyperthermophilic bacterium Aquifex aeolicus.</title>
        <authorList>
            <person name="Deckert G."/>
            <person name="Warren P.V."/>
            <person name="Gaasterland T."/>
            <person name="Young W.G."/>
            <person name="Lenox A.L."/>
            <person name="Graham D.E."/>
            <person name="Overbeek R."/>
            <person name="Snead M.A."/>
            <person name="Keller M."/>
            <person name="Aujay M."/>
            <person name="Huber R."/>
            <person name="Feldman R.A."/>
            <person name="Short J.M."/>
            <person name="Olsen G.J."/>
            <person name="Swanson R.V."/>
        </authorList>
    </citation>
    <scope>NUCLEOTIDE SEQUENCE [LARGE SCALE GENOMIC DNA]</scope>
    <source>
        <strain>VF5</strain>
    </source>
</reference>
<dbReference type="EMBL" id="AE000667">
    <property type="protein sequence ID" value="AAC07969.1"/>
    <property type="molecule type" value="Genomic_DNA"/>
</dbReference>
<dbReference type="RefSeq" id="NP_046417.1">
    <property type="nucleotide sequence ID" value="NC_001880.1"/>
</dbReference>
<dbReference type="EnsemblBacteria" id="AAC07969">
    <property type="protein sequence ID" value="AAC07969"/>
    <property type="gene ID" value="aq_aa26"/>
</dbReference>
<dbReference type="KEGG" id="aae:aq_aa26"/>
<dbReference type="HOGENOM" id="CLU_1406201_0_0_0"/>
<dbReference type="InParanoid" id="O66417"/>
<dbReference type="OrthoDB" id="78158at2"/>
<dbReference type="Proteomes" id="UP000000798">
    <property type="component" value="Plasmid ece1"/>
</dbReference>
<proteinExistence type="predicted"/>
<feature type="chain" id="PRO_0000186997" description="Uncharacterized protein aq_aa26">
    <location>
        <begin position="1"/>
        <end position="193"/>
    </location>
</feature>